<accession>A5USI5</accession>
<feature type="chain" id="PRO_1000051117" description="Small ribosomal subunit protein uS19">
    <location>
        <begin position="1"/>
        <end position="95"/>
    </location>
</feature>
<feature type="region of interest" description="Disordered" evidence="2">
    <location>
        <begin position="75"/>
        <end position="95"/>
    </location>
</feature>
<feature type="compositionally biased region" description="Basic residues" evidence="2">
    <location>
        <begin position="80"/>
        <end position="95"/>
    </location>
</feature>
<name>RS19_ROSS1</name>
<sequence>MSRSSKKGPYVDIRLLNRIEELNRANEKRVLRTWSRDSTIFPQMVGHTIAVHDGRRHVPVYITENMVGHKLGEFAPTRSFRGHGGKKADKRGKMK</sequence>
<comment type="function">
    <text evidence="1">Protein S19 forms a complex with S13 that binds strongly to the 16S ribosomal RNA.</text>
</comment>
<comment type="similarity">
    <text evidence="1">Belongs to the universal ribosomal protein uS19 family.</text>
</comment>
<evidence type="ECO:0000255" key="1">
    <source>
        <dbReference type="HAMAP-Rule" id="MF_00531"/>
    </source>
</evidence>
<evidence type="ECO:0000256" key="2">
    <source>
        <dbReference type="SAM" id="MobiDB-lite"/>
    </source>
</evidence>
<evidence type="ECO:0000305" key="3"/>
<reference key="1">
    <citation type="submission" date="2007-04" db="EMBL/GenBank/DDBJ databases">
        <title>Complete sequence of Roseiflexus sp. RS-1.</title>
        <authorList>
            <consortium name="US DOE Joint Genome Institute"/>
            <person name="Copeland A."/>
            <person name="Lucas S."/>
            <person name="Lapidus A."/>
            <person name="Barry K."/>
            <person name="Detter J.C."/>
            <person name="Glavina del Rio T."/>
            <person name="Hammon N."/>
            <person name="Israni S."/>
            <person name="Dalin E."/>
            <person name="Tice H."/>
            <person name="Pitluck S."/>
            <person name="Chertkov O."/>
            <person name="Brettin T."/>
            <person name="Bruce D."/>
            <person name="Han C."/>
            <person name="Schmutz J."/>
            <person name="Larimer F."/>
            <person name="Land M."/>
            <person name="Hauser L."/>
            <person name="Kyrpides N."/>
            <person name="Mikhailova N."/>
            <person name="Bryant D.A."/>
            <person name="Richardson P."/>
        </authorList>
    </citation>
    <scope>NUCLEOTIDE SEQUENCE [LARGE SCALE GENOMIC DNA]</scope>
    <source>
        <strain>RS-1</strain>
    </source>
</reference>
<organism>
    <name type="scientific">Roseiflexus sp. (strain RS-1)</name>
    <dbReference type="NCBI Taxonomy" id="357808"/>
    <lineage>
        <taxon>Bacteria</taxon>
        <taxon>Bacillati</taxon>
        <taxon>Chloroflexota</taxon>
        <taxon>Chloroflexia</taxon>
        <taxon>Chloroflexales</taxon>
        <taxon>Roseiflexineae</taxon>
        <taxon>Roseiflexaceae</taxon>
        <taxon>Roseiflexus</taxon>
    </lineage>
</organism>
<dbReference type="EMBL" id="CP000686">
    <property type="protein sequence ID" value="ABQ89588.1"/>
    <property type="molecule type" value="Genomic_DNA"/>
</dbReference>
<dbReference type="RefSeq" id="WP_011955941.1">
    <property type="nucleotide sequence ID" value="NC_009523.1"/>
</dbReference>
<dbReference type="SMR" id="A5USI5"/>
<dbReference type="STRING" id="357808.RoseRS_1181"/>
<dbReference type="KEGG" id="rrs:RoseRS_1181"/>
<dbReference type="eggNOG" id="COG0185">
    <property type="taxonomic scope" value="Bacteria"/>
</dbReference>
<dbReference type="HOGENOM" id="CLU_144911_0_1_0"/>
<dbReference type="OrthoDB" id="9797833at2"/>
<dbReference type="Proteomes" id="UP000006554">
    <property type="component" value="Chromosome"/>
</dbReference>
<dbReference type="GO" id="GO:0005737">
    <property type="term" value="C:cytoplasm"/>
    <property type="evidence" value="ECO:0007669"/>
    <property type="project" value="UniProtKB-ARBA"/>
</dbReference>
<dbReference type="GO" id="GO:0015935">
    <property type="term" value="C:small ribosomal subunit"/>
    <property type="evidence" value="ECO:0007669"/>
    <property type="project" value="InterPro"/>
</dbReference>
<dbReference type="GO" id="GO:0019843">
    <property type="term" value="F:rRNA binding"/>
    <property type="evidence" value="ECO:0007669"/>
    <property type="project" value="UniProtKB-UniRule"/>
</dbReference>
<dbReference type="GO" id="GO:0003735">
    <property type="term" value="F:structural constituent of ribosome"/>
    <property type="evidence" value="ECO:0007669"/>
    <property type="project" value="InterPro"/>
</dbReference>
<dbReference type="GO" id="GO:0000028">
    <property type="term" value="P:ribosomal small subunit assembly"/>
    <property type="evidence" value="ECO:0007669"/>
    <property type="project" value="TreeGrafter"/>
</dbReference>
<dbReference type="GO" id="GO:0006412">
    <property type="term" value="P:translation"/>
    <property type="evidence" value="ECO:0007669"/>
    <property type="project" value="UniProtKB-UniRule"/>
</dbReference>
<dbReference type="FunFam" id="3.30.860.10:FF:000001">
    <property type="entry name" value="30S ribosomal protein S19"/>
    <property type="match status" value="1"/>
</dbReference>
<dbReference type="Gene3D" id="3.30.860.10">
    <property type="entry name" value="30s Ribosomal Protein S19, Chain A"/>
    <property type="match status" value="1"/>
</dbReference>
<dbReference type="HAMAP" id="MF_00531">
    <property type="entry name" value="Ribosomal_uS19"/>
    <property type="match status" value="1"/>
</dbReference>
<dbReference type="InterPro" id="IPR002222">
    <property type="entry name" value="Ribosomal_uS19"/>
</dbReference>
<dbReference type="InterPro" id="IPR005732">
    <property type="entry name" value="Ribosomal_uS19_bac-type"/>
</dbReference>
<dbReference type="InterPro" id="IPR020934">
    <property type="entry name" value="Ribosomal_uS19_CS"/>
</dbReference>
<dbReference type="InterPro" id="IPR023575">
    <property type="entry name" value="Ribosomal_uS19_SF"/>
</dbReference>
<dbReference type="NCBIfam" id="TIGR01050">
    <property type="entry name" value="rpsS_bact"/>
    <property type="match status" value="1"/>
</dbReference>
<dbReference type="PANTHER" id="PTHR11880">
    <property type="entry name" value="RIBOSOMAL PROTEIN S19P FAMILY MEMBER"/>
    <property type="match status" value="1"/>
</dbReference>
<dbReference type="PANTHER" id="PTHR11880:SF8">
    <property type="entry name" value="SMALL RIBOSOMAL SUBUNIT PROTEIN US19M"/>
    <property type="match status" value="1"/>
</dbReference>
<dbReference type="Pfam" id="PF00203">
    <property type="entry name" value="Ribosomal_S19"/>
    <property type="match status" value="1"/>
</dbReference>
<dbReference type="PIRSF" id="PIRSF002144">
    <property type="entry name" value="Ribosomal_S19"/>
    <property type="match status" value="1"/>
</dbReference>
<dbReference type="PRINTS" id="PR00975">
    <property type="entry name" value="RIBOSOMALS19"/>
</dbReference>
<dbReference type="SUPFAM" id="SSF54570">
    <property type="entry name" value="Ribosomal protein S19"/>
    <property type="match status" value="1"/>
</dbReference>
<dbReference type="PROSITE" id="PS00323">
    <property type="entry name" value="RIBOSOMAL_S19"/>
    <property type="match status" value="1"/>
</dbReference>
<protein>
    <recommendedName>
        <fullName evidence="1">Small ribosomal subunit protein uS19</fullName>
    </recommendedName>
    <alternativeName>
        <fullName evidence="3">30S ribosomal protein S19</fullName>
    </alternativeName>
</protein>
<gene>
    <name evidence="1" type="primary">rpsS</name>
    <name type="ordered locus">RoseRS_1181</name>
</gene>
<keyword id="KW-0687">Ribonucleoprotein</keyword>
<keyword id="KW-0689">Ribosomal protein</keyword>
<keyword id="KW-0694">RNA-binding</keyword>
<keyword id="KW-0699">rRNA-binding</keyword>
<proteinExistence type="inferred from homology"/>